<comment type="function">
    <text evidence="3 4 5">Short chain dehydrogenase; part of the gene cluster that mediates the biosynthesis of aspercryptins, linear lipopeptides built from six amino acids including 2 highly unusual and nonproteogenic amino acids, 2-amino-octanoic acid (2aoa) and 2-amino-dodecanol (2adol) (PubMed:23248299, PubMed:26563584, PubMed:27310134). The core structure of aspercryptins is as follows: Ser/Ala-Thr-Ile/Val-2aoa-Asn-2adol (PubMed:27310134). The first step of aspercryptin biosynthesis is the generation of the fatty acid precursors, octanoic and dodecanoic acids, by the FAS subunits atnF and atnM (PubMed:26563584, PubMed:27310134). The fatty acid precursors are likely transformed into the corresponding alpha-amino fatty acids in three steps (PubMed:26563584, PubMed:27310134). First, they are hydroxylated by the cytochrome P450 monooxygenase atnE, then oxidized to the corresponding alpha-keto acids by the NAD(P)-dependent oxidoreductase atnD, and finally converted to the alpha-amino fatty acids by the PLP-dependent aminotransferases atnH or atnJ (PubMed:26563584, PubMed:27310134). the alpha-amino fatty acids, 2-amino-octanoic and 2-amino-dodecanoic acids, are recognized, activated, and covalently tethered to the NRPS atnA by its fourth and sixth adenylation domains (PubMed:27310134). The second module of atnA is the Thr module and contains an epimerase (E) domain responsible for the epimerization of Thr to D-allo-Thr (PubMed:26563584). Additionally, despite atnA having only one epimerase domain, the first amino acid of aspercryptin A1 is D-Ser, suggesting that serine is either loaded directly as D-Ser on the first module or that the epimerase domain in the threonine module epimerizes both L-Ser and L-Thr (PubMed:27310134). After condensation of the hexapeptide of aspercryptin, the C-terminal reductase (TE) domain might be involved in the reductive release and production of the aldehyde hexapeptide (PubMed:26563584). Further reduction would generate aspercryptins (PubMed:26563584, PubMed:27310134). The variety of aspercryptins produced reflects the flexibility of the atnA NRPS, allowing incorporation of alanine instead of serine, valine for isoleucine, and a C10 fatty amino alcohol instead of the C12 version (PubMed:27310134). AtnB seems to be involved in the selectivity for Ile versus Val by the third module (PubMed:26563584). Moreover, type B, C and D aspercryptins have an additional N-terminal cichorine, acetyl and propionyl group respectively (PubMed:27310134).</text>
</comment>
<comment type="pathway">
    <text evidence="4">Secondary metabolite biosynthesis.</text>
</comment>
<comment type="induction">
    <text evidence="5">Expression is positively regulated by the aspercryptin cluser-specific transcription factor atnN (PubMed:27310134).</text>
</comment>
<comment type="disruption phenotype">
    <text evidence="4">Abolishes the production of aspercryptin (PubMed:26563584).</text>
</comment>
<comment type="similarity">
    <text evidence="7">Belongs to the short-chain dehydrogenases/reductases (SDR) family.</text>
</comment>
<comment type="sequence caution" evidence="7">
    <conflict type="erroneous gene model prediction">
        <sequence resource="EMBL-CDS" id="EAA59536"/>
    </conflict>
</comment>
<organism>
    <name type="scientific">Emericella nidulans (strain FGSC A4 / ATCC 38163 / CBS 112.46 / NRRL 194 / M139)</name>
    <name type="common">Aspergillus nidulans</name>
    <dbReference type="NCBI Taxonomy" id="227321"/>
    <lineage>
        <taxon>Eukaryota</taxon>
        <taxon>Fungi</taxon>
        <taxon>Dikarya</taxon>
        <taxon>Ascomycota</taxon>
        <taxon>Pezizomycotina</taxon>
        <taxon>Eurotiomycetes</taxon>
        <taxon>Eurotiomycetidae</taxon>
        <taxon>Eurotiales</taxon>
        <taxon>Aspergillaceae</taxon>
        <taxon>Aspergillus</taxon>
        <taxon>Aspergillus subgen. Nidulantes</taxon>
    </lineage>
</organism>
<gene>
    <name evidence="6" type="primary">atnD</name>
    <name type="ORF">AN7882</name>
    <name type="ORF">ANIA_11028</name>
</gene>
<proteinExistence type="evidence at transcript level"/>
<dbReference type="EC" id="1.1.1.-" evidence="8"/>
<dbReference type="EMBL" id="BN001302">
    <property type="protein sequence ID" value="CBF73447.1"/>
    <property type="molecule type" value="Genomic_DNA"/>
</dbReference>
<dbReference type="EMBL" id="AACD01000135">
    <property type="protein sequence ID" value="EAA59536.1"/>
    <property type="status" value="ALT_SEQ"/>
    <property type="molecule type" value="Genomic_DNA"/>
</dbReference>
<dbReference type="RefSeq" id="XP_681151.1">
    <property type="nucleotide sequence ID" value="XM_676059.1"/>
</dbReference>
<dbReference type="SMR" id="C8V3Y7"/>
<dbReference type="STRING" id="227321.C8V3Y7"/>
<dbReference type="EnsemblFungi" id="CBF73447">
    <property type="protein sequence ID" value="CBF73447"/>
    <property type="gene ID" value="ANIA_11028"/>
</dbReference>
<dbReference type="eggNOG" id="KOG1208">
    <property type="taxonomic scope" value="Eukaryota"/>
</dbReference>
<dbReference type="HOGENOM" id="CLU_010194_44_4_1"/>
<dbReference type="InParanoid" id="C8V3Y7"/>
<dbReference type="OMA" id="VSETHAW"/>
<dbReference type="OrthoDB" id="542013at2759"/>
<dbReference type="Proteomes" id="UP000000560">
    <property type="component" value="Chromosome II"/>
</dbReference>
<dbReference type="GO" id="GO:0016491">
    <property type="term" value="F:oxidoreductase activity"/>
    <property type="evidence" value="ECO:0007669"/>
    <property type="project" value="UniProtKB-KW"/>
</dbReference>
<dbReference type="Gene3D" id="3.40.50.720">
    <property type="entry name" value="NAD(P)-binding Rossmann-like Domain"/>
    <property type="match status" value="1"/>
</dbReference>
<dbReference type="InterPro" id="IPR036291">
    <property type="entry name" value="NAD(P)-bd_dom_sf"/>
</dbReference>
<dbReference type="InterPro" id="IPR002347">
    <property type="entry name" value="SDR_fam"/>
</dbReference>
<dbReference type="PANTHER" id="PTHR43157:SF31">
    <property type="entry name" value="PHOSPHATIDYLINOSITOL-GLYCAN BIOSYNTHESIS CLASS F PROTEIN"/>
    <property type="match status" value="1"/>
</dbReference>
<dbReference type="PANTHER" id="PTHR43157">
    <property type="entry name" value="PHOSPHATIDYLINOSITOL-GLYCAN BIOSYNTHESIS CLASS F PROTEIN-RELATED"/>
    <property type="match status" value="1"/>
</dbReference>
<dbReference type="Pfam" id="PF00106">
    <property type="entry name" value="adh_short"/>
    <property type="match status" value="1"/>
</dbReference>
<dbReference type="PRINTS" id="PR00081">
    <property type="entry name" value="GDHRDH"/>
</dbReference>
<dbReference type="SUPFAM" id="SSF51735">
    <property type="entry name" value="NAD(P)-binding Rossmann-fold domains"/>
    <property type="match status" value="1"/>
</dbReference>
<protein>
    <recommendedName>
        <fullName evidence="6">Short chain dehydrogenase atnD</fullName>
        <ecNumber evidence="8">1.1.1.-</ecNumber>
    </recommendedName>
    <alternativeName>
        <fullName evidence="6">Aspercryptin biosynthesis cluster protein D</fullName>
    </alternativeName>
</protein>
<name>ATND_EMENI</name>
<reference key="1">
    <citation type="journal article" date="2005" name="Nature">
        <title>Sequencing of Aspergillus nidulans and comparative analysis with A. fumigatus and A. oryzae.</title>
        <authorList>
            <person name="Galagan J.E."/>
            <person name="Calvo S.E."/>
            <person name="Cuomo C."/>
            <person name="Ma L.-J."/>
            <person name="Wortman J.R."/>
            <person name="Batzoglou S."/>
            <person name="Lee S.-I."/>
            <person name="Bastuerkmen M."/>
            <person name="Spevak C.C."/>
            <person name="Clutterbuck J."/>
            <person name="Kapitonov V."/>
            <person name="Jurka J."/>
            <person name="Scazzocchio C."/>
            <person name="Farman M.L."/>
            <person name="Butler J."/>
            <person name="Purcell S."/>
            <person name="Harris S."/>
            <person name="Braus G.H."/>
            <person name="Draht O."/>
            <person name="Busch S."/>
            <person name="D'Enfert C."/>
            <person name="Bouchier C."/>
            <person name="Goldman G.H."/>
            <person name="Bell-Pedersen D."/>
            <person name="Griffiths-Jones S."/>
            <person name="Doonan J.H."/>
            <person name="Yu J."/>
            <person name="Vienken K."/>
            <person name="Pain A."/>
            <person name="Freitag M."/>
            <person name="Selker E.U."/>
            <person name="Archer D.B."/>
            <person name="Penalva M.A."/>
            <person name="Oakley B.R."/>
            <person name="Momany M."/>
            <person name="Tanaka T."/>
            <person name="Kumagai T."/>
            <person name="Asai K."/>
            <person name="Machida M."/>
            <person name="Nierman W.C."/>
            <person name="Denning D.W."/>
            <person name="Caddick M.X."/>
            <person name="Hynes M."/>
            <person name="Paoletti M."/>
            <person name="Fischer R."/>
            <person name="Miller B.L."/>
            <person name="Dyer P.S."/>
            <person name="Sachs M.S."/>
            <person name="Osmani S.A."/>
            <person name="Birren B.W."/>
        </authorList>
    </citation>
    <scope>NUCLEOTIDE SEQUENCE [LARGE SCALE GENOMIC DNA]</scope>
    <source>
        <strain>FGSC A4 / ATCC 38163 / CBS 112.46 / NRRL 194 / M139</strain>
    </source>
</reference>
<reference key="2">
    <citation type="journal article" date="2009" name="Fungal Genet. Biol.">
        <title>The 2008 update of the Aspergillus nidulans genome annotation: a community effort.</title>
        <authorList>
            <person name="Wortman J.R."/>
            <person name="Gilsenan J.M."/>
            <person name="Joardar V."/>
            <person name="Deegan J."/>
            <person name="Clutterbuck J."/>
            <person name="Andersen M.R."/>
            <person name="Archer D."/>
            <person name="Bencina M."/>
            <person name="Braus G."/>
            <person name="Coutinho P."/>
            <person name="von Dohren H."/>
            <person name="Doonan J."/>
            <person name="Driessen A.J."/>
            <person name="Durek P."/>
            <person name="Espeso E."/>
            <person name="Fekete E."/>
            <person name="Flipphi M."/>
            <person name="Estrada C.G."/>
            <person name="Geysens S."/>
            <person name="Goldman G."/>
            <person name="de Groot P.W."/>
            <person name="Hansen K."/>
            <person name="Harris S.D."/>
            <person name="Heinekamp T."/>
            <person name="Helmstaedt K."/>
            <person name="Henrissat B."/>
            <person name="Hofmann G."/>
            <person name="Homan T."/>
            <person name="Horio T."/>
            <person name="Horiuchi H."/>
            <person name="James S."/>
            <person name="Jones M."/>
            <person name="Karaffa L."/>
            <person name="Karanyi Z."/>
            <person name="Kato M."/>
            <person name="Keller N."/>
            <person name="Kelly D.E."/>
            <person name="Kiel J.A."/>
            <person name="Kim J.M."/>
            <person name="van der Klei I.J."/>
            <person name="Klis F.M."/>
            <person name="Kovalchuk A."/>
            <person name="Krasevec N."/>
            <person name="Kubicek C.P."/>
            <person name="Liu B."/>
            <person name="Maccabe A."/>
            <person name="Meyer V."/>
            <person name="Mirabito P."/>
            <person name="Miskei M."/>
            <person name="Mos M."/>
            <person name="Mullins J."/>
            <person name="Nelson D.R."/>
            <person name="Nielsen J."/>
            <person name="Oakley B.R."/>
            <person name="Osmani S.A."/>
            <person name="Pakula T."/>
            <person name="Paszewski A."/>
            <person name="Paulsen I."/>
            <person name="Pilsyk S."/>
            <person name="Pocsi I."/>
            <person name="Punt P.J."/>
            <person name="Ram A.F."/>
            <person name="Ren Q."/>
            <person name="Robellet X."/>
            <person name="Robson G."/>
            <person name="Seiboth B."/>
            <person name="van Solingen P."/>
            <person name="Specht T."/>
            <person name="Sun J."/>
            <person name="Taheri-Talesh N."/>
            <person name="Takeshita N."/>
            <person name="Ussery D."/>
            <person name="vanKuyk P.A."/>
            <person name="Visser H."/>
            <person name="van de Vondervoort P.J."/>
            <person name="de Vries R.P."/>
            <person name="Walton J."/>
            <person name="Xiang X."/>
            <person name="Xiong Y."/>
            <person name="Zeng A.P."/>
            <person name="Brandt B.W."/>
            <person name="Cornell M.J."/>
            <person name="van den Hondel C.A."/>
            <person name="Visser J."/>
            <person name="Oliver S.G."/>
            <person name="Turner G."/>
        </authorList>
    </citation>
    <scope>GENOME REANNOTATION</scope>
    <source>
        <strain>FGSC A4 / ATCC 38163 / CBS 112.46 / NRRL 194 / M139</strain>
    </source>
</reference>
<reference key="3">
    <citation type="journal article" date="2013" name="Proc. Natl. Acad. Sci. U.S.A.">
        <title>Accurate prediction of secondary metabolite gene clusters in filamentous fungi.</title>
        <authorList>
            <person name="Andersen M.R."/>
            <person name="Nielsen J.B."/>
            <person name="Klitgaard A."/>
            <person name="Petersen L.M."/>
            <person name="Zachariasen M."/>
            <person name="Hansen T.J."/>
            <person name="Blicher L.H."/>
            <person name="Gotfredsen C.H."/>
            <person name="Larsen T.O."/>
            <person name="Nielsen K.F."/>
            <person name="Mortensen U.H."/>
        </authorList>
    </citation>
    <scope>IDENTIFICATION OF THE CLUSTER</scope>
</reference>
<reference key="4">
    <citation type="journal article" date="2016" name="ACS Chem. Biol.">
        <title>New aspercryptins, lipopeptide natural products, revealed by HDAC inhibition in Aspergillus nidulans.</title>
        <authorList>
            <person name="Henke M.T."/>
            <person name="Soukup A.A."/>
            <person name="Goering A.W."/>
            <person name="McClure R.A."/>
            <person name="Thomson R.J."/>
            <person name="Keller N.P."/>
            <person name="Kelleher N.L."/>
        </authorList>
    </citation>
    <scope>FUNCTION</scope>
    <scope>INDUCTION</scope>
</reference>
<reference key="5">
    <citation type="journal article" date="2016" name="Angew. Chem. Int. Ed.">
        <title>Development of genetic dereplication strains in Aspergillus nidulans results in the discovery of aspercryptin.</title>
        <authorList>
            <person name="Chiang Y.M."/>
            <person name="Ahuja M."/>
            <person name="Oakley C.E."/>
            <person name="Entwistle R."/>
            <person name="Asokan A."/>
            <person name="Zutz C."/>
            <person name="Wang C.C."/>
            <person name="Oakley B.R."/>
        </authorList>
    </citation>
    <scope>FUNCTION</scope>
    <scope>DISRUPTION PHENOTYPE</scope>
    <scope>PATHWAY</scope>
</reference>
<accession>C8V3Y7</accession>
<accession>Q5AUZ8</accession>
<sequence length="314" mass="34736">MANPERSYLSRFFSSQFSKLPYPSQSFKDAVILVTGGNTGLGLEAARHFVRLQAATVILAVRDLKKGEQAKLSIEESTKVQGVVEVWQVDLEDVRSVQSLAAKASSLPRLDVVVANAGISTNKWALVGDMERTIQVNVLSTFLLILALLPKMQEQDIEGQIRARPRVVVVSSEGHETTAFAERKAARIFDALRDQRQANMDERYDTSKLIQLYLVRALAERLSRSDKPPVTLNAVSPGLCKTGLLRETPLVARLLTGPVMAILARNAEEGSRTLVHAAAANDGETNGKYLRDYLQRLYAAKKATPRRRDCCRSF</sequence>
<evidence type="ECO:0000250" key="1">
    <source>
        <dbReference type="UniProtKB" id="L0E2Z4"/>
    </source>
</evidence>
<evidence type="ECO:0000250" key="2">
    <source>
        <dbReference type="UniProtKB" id="O93868"/>
    </source>
</evidence>
<evidence type="ECO:0000269" key="3">
    <source>
    </source>
</evidence>
<evidence type="ECO:0000269" key="4">
    <source>
    </source>
</evidence>
<evidence type="ECO:0000269" key="5">
    <source>
    </source>
</evidence>
<evidence type="ECO:0000303" key="6">
    <source>
    </source>
</evidence>
<evidence type="ECO:0000305" key="7"/>
<evidence type="ECO:0000305" key="8">
    <source>
    </source>
</evidence>
<feature type="chain" id="PRO_0000444135" description="Short chain dehydrogenase atnD">
    <location>
        <begin position="1"/>
        <end position="314"/>
    </location>
</feature>
<feature type="active site" description="Proton donor" evidence="2">
    <location>
        <position position="171"/>
    </location>
</feature>
<feature type="active site" description="Proton donor" evidence="2">
    <location>
        <position position="204"/>
    </location>
</feature>
<feature type="active site" description="Lowers pKa of active site Tyr" evidence="2">
    <location>
        <position position="208"/>
    </location>
</feature>
<feature type="binding site" evidence="1">
    <location>
        <position position="41"/>
    </location>
    <ligand>
        <name>NADP(+)</name>
        <dbReference type="ChEBI" id="CHEBI:58349"/>
    </ligand>
</feature>
<feature type="binding site" evidence="1">
    <location>
        <position position="66"/>
    </location>
    <ligand>
        <name>NADP(+)</name>
        <dbReference type="ChEBI" id="CHEBI:58349"/>
    </ligand>
</feature>
<feature type="binding site" evidence="1">
    <location>
        <position position="90"/>
    </location>
    <ligand>
        <name>NADP(+)</name>
        <dbReference type="ChEBI" id="CHEBI:58349"/>
    </ligand>
</feature>
<feature type="binding site" evidence="2">
    <location>
        <position position="116"/>
    </location>
    <ligand>
        <name>NADP(+)</name>
        <dbReference type="ChEBI" id="CHEBI:58349"/>
    </ligand>
</feature>
<feature type="binding site" evidence="2">
    <location>
        <position position="204"/>
    </location>
    <ligand>
        <name>NADP(+)</name>
        <dbReference type="ChEBI" id="CHEBI:58349"/>
    </ligand>
</feature>
<feature type="binding site" evidence="2">
    <location>
        <position position="208"/>
    </location>
    <ligand>
        <name>NADP(+)</name>
        <dbReference type="ChEBI" id="CHEBI:58349"/>
    </ligand>
</feature>
<keyword id="KW-0521">NADP</keyword>
<keyword id="KW-0560">Oxidoreductase</keyword>
<keyword id="KW-1185">Reference proteome</keyword>